<dbReference type="EC" id="2.1.2.11" evidence="1"/>
<dbReference type="EMBL" id="AE008692">
    <property type="protein sequence ID" value="AAV90576.1"/>
    <property type="status" value="ALT_INIT"/>
    <property type="molecule type" value="Genomic_DNA"/>
</dbReference>
<dbReference type="SMR" id="Q5NL34"/>
<dbReference type="STRING" id="264203.ZMO1952"/>
<dbReference type="KEGG" id="zmo:ZMO1952"/>
<dbReference type="eggNOG" id="COG0413">
    <property type="taxonomic scope" value="Bacteria"/>
</dbReference>
<dbReference type="HOGENOM" id="CLU_036645_1_0_5"/>
<dbReference type="UniPathway" id="UPA00028">
    <property type="reaction ID" value="UER00003"/>
</dbReference>
<dbReference type="Proteomes" id="UP000001173">
    <property type="component" value="Chromosome"/>
</dbReference>
<dbReference type="GO" id="GO:0005737">
    <property type="term" value="C:cytoplasm"/>
    <property type="evidence" value="ECO:0007669"/>
    <property type="project" value="UniProtKB-SubCell"/>
</dbReference>
<dbReference type="GO" id="GO:0003864">
    <property type="term" value="F:3-methyl-2-oxobutanoate hydroxymethyltransferase activity"/>
    <property type="evidence" value="ECO:0007669"/>
    <property type="project" value="UniProtKB-UniRule"/>
</dbReference>
<dbReference type="GO" id="GO:0000287">
    <property type="term" value="F:magnesium ion binding"/>
    <property type="evidence" value="ECO:0007669"/>
    <property type="project" value="TreeGrafter"/>
</dbReference>
<dbReference type="GO" id="GO:0015940">
    <property type="term" value="P:pantothenate biosynthetic process"/>
    <property type="evidence" value="ECO:0007669"/>
    <property type="project" value="UniProtKB-UniRule"/>
</dbReference>
<dbReference type="CDD" id="cd06557">
    <property type="entry name" value="KPHMT-like"/>
    <property type="match status" value="1"/>
</dbReference>
<dbReference type="FunFam" id="3.20.20.60:FF:000003">
    <property type="entry name" value="3-methyl-2-oxobutanoate hydroxymethyltransferase"/>
    <property type="match status" value="1"/>
</dbReference>
<dbReference type="Gene3D" id="3.20.20.60">
    <property type="entry name" value="Phosphoenolpyruvate-binding domains"/>
    <property type="match status" value="1"/>
</dbReference>
<dbReference type="HAMAP" id="MF_00156">
    <property type="entry name" value="PanB"/>
    <property type="match status" value="1"/>
</dbReference>
<dbReference type="InterPro" id="IPR003700">
    <property type="entry name" value="Pantoate_hydroxy_MeTrfase"/>
</dbReference>
<dbReference type="InterPro" id="IPR015813">
    <property type="entry name" value="Pyrv/PenolPyrv_kinase-like_dom"/>
</dbReference>
<dbReference type="InterPro" id="IPR040442">
    <property type="entry name" value="Pyrv_kinase-like_dom_sf"/>
</dbReference>
<dbReference type="NCBIfam" id="TIGR00222">
    <property type="entry name" value="panB"/>
    <property type="match status" value="1"/>
</dbReference>
<dbReference type="NCBIfam" id="NF001452">
    <property type="entry name" value="PRK00311.1"/>
    <property type="match status" value="1"/>
</dbReference>
<dbReference type="PANTHER" id="PTHR20881">
    <property type="entry name" value="3-METHYL-2-OXOBUTANOATE HYDROXYMETHYLTRANSFERASE"/>
    <property type="match status" value="1"/>
</dbReference>
<dbReference type="PANTHER" id="PTHR20881:SF0">
    <property type="entry name" value="3-METHYL-2-OXOBUTANOATE HYDROXYMETHYLTRANSFERASE"/>
    <property type="match status" value="1"/>
</dbReference>
<dbReference type="Pfam" id="PF02548">
    <property type="entry name" value="Pantoate_transf"/>
    <property type="match status" value="1"/>
</dbReference>
<dbReference type="PIRSF" id="PIRSF000388">
    <property type="entry name" value="Pantoate_hydroxy_MeTrfase"/>
    <property type="match status" value="1"/>
</dbReference>
<dbReference type="SUPFAM" id="SSF51621">
    <property type="entry name" value="Phosphoenolpyruvate/pyruvate domain"/>
    <property type="match status" value="1"/>
</dbReference>
<evidence type="ECO:0000255" key="1">
    <source>
        <dbReference type="HAMAP-Rule" id="MF_00156"/>
    </source>
</evidence>
<evidence type="ECO:0000305" key="2"/>
<reference key="1">
    <citation type="journal article" date="2005" name="Nat. Biotechnol.">
        <title>The genome sequence of the ethanologenic bacterium Zymomonas mobilis ZM4.</title>
        <authorList>
            <person name="Seo J.-S."/>
            <person name="Chong H."/>
            <person name="Park H.S."/>
            <person name="Yoon K.-O."/>
            <person name="Jung C."/>
            <person name="Kim J.J."/>
            <person name="Hong J.H."/>
            <person name="Kim H."/>
            <person name="Kim J.-H."/>
            <person name="Kil J.-I."/>
            <person name="Park C.J."/>
            <person name="Oh H.-M."/>
            <person name="Lee J.-S."/>
            <person name="Jin S.-J."/>
            <person name="Um H.-W."/>
            <person name="Lee H.-J."/>
            <person name="Oh S.-J."/>
            <person name="Kim J.Y."/>
            <person name="Kang H.L."/>
            <person name="Lee S.Y."/>
            <person name="Lee K.J."/>
            <person name="Kang H.S."/>
        </authorList>
    </citation>
    <scope>NUCLEOTIDE SEQUENCE [LARGE SCALE GENOMIC DNA]</scope>
    <source>
        <strain>ATCC 31821 / ZM4 / CP4</strain>
    </source>
</reference>
<name>PANB1_ZYMMO</name>
<feature type="chain" id="PRO_0000297418" description="3-methyl-2-oxobutanoate hydroxymethyltransferase 1">
    <location>
        <begin position="1"/>
        <end position="302"/>
    </location>
</feature>
<feature type="active site" description="Proton acceptor" evidence="1">
    <location>
        <position position="217"/>
    </location>
</feature>
<feature type="binding site" evidence="1">
    <location>
        <begin position="75"/>
        <end position="76"/>
    </location>
    <ligand>
        <name>3-methyl-2-oxobutanoate</name>
        <dbReference type="ChEBI" id="CHEBI:11851"/>
    </ligand>
</feature>
<feature type="binding site" evidence="1">
    <location>
        <position position="75"/>
    </location>
    <ligand>
        <name>Mg(2+)</name>
        <dbReference type="ChEBI" id="CHEBI:18420"/>
    </ligand>
</feature>
<feature type="binding site" evidence="1">
    <location>
        <position position="118"/>
    </location>
    <ligand>
        <name>3-methyl-2-oxobutanoate</name>
        <dbReference type="ChEBI" id="CHEBI:11851"/>
    </ligand>
</feature>
<feature type="binding site" evidence="1">
    <location>
        <position position="118"/>
    </location>
    <ligand>
        <name>Mg(2+)</name>
        <dbReference type="ChEBI" id="CHEBI:18420"/>
    </ligand>
</feature>
<feature type="binding site" evidence="1">
    <location>
        <position position="147"/>
    </location>
    <ligand>
        <name>3-methyl-2-oxobutanoate</name>
        <dbReference type="ChEBI" id="CHEBI:11851"/>
    </ligand>
</feature>
<feature type="binding site" evidence="1">
    <location>
        <position position="149"/>
    </location>
    <ligand>
        <name>Mg(2+)</name>
        <dbReference type="ChEBI" id="CHEBI:18420"/>
    </ligand>
</feature>
<organism>
    <name type="scientific">Zymomonas mobilis subsp. mobilis (strain ATCC 31821 / ZM4 / CP4)</name>
    <dbReference type="NCBI Taxonomy" id="264203"/>
    <lineage>
        <taxon>Bacteria</taxon>
        <taxon>Pseudomonadati</taxon>
        <taxon>Pseudomonadota</taxon>
        <taxon>Alphaproteobacteria</taxon>
        <taxon>Sphingomonadales</taxon>
        <taxon>Zymomonadaceae</taxon>
        <taxon>Zymomonas</taxon>
    </lineage>
</organism>
<protein>
    <recommendedName>
        <fullName evidence="1">3-methyl-2-oxobutanoate hydroxymethyltransferase 1</fullName>
        <ecNumber evidence="1">2.1.2.11</ecNumber>
    </recommendedName>
    <alternativeName>
        <fullName evidence="1">Ketopantoate hydroxymethyltransferase 1</fullName>
        <shortName evidence="1">KPHMT 1</shortName>
    </alternativeName>
</protein>
<gene>
    <name evidence="1" type="primary">panB1</name>
    <name type="ordered locus">ZMO1952</name>
</gene>
<proteinExistence type="inferred from homology"/>
<keyword id="KW-0963">Cytoplasm</keyword>
<keyword id="KW-0460">Magnesium</keyword>
<keyword id="KW-0479">Metal-binding</keyword>
<keyword id="KW-0566">Pantothenate biosynthesis</keyword>
<keyword id="KW-1185">Reference proteome</keyword>
<keyword id="KW-0808">Transferase</keyword>
<comment type="function">
    <text evidence="1">Catalyzes the reversible reaction in which hydroxymethyl group from 5,10-methylenetetrahydrofolate is transferred onto alpha-ketoisovalerate to form ketopantoate.</text>
</comment>
<comment type="catalytic activity">
    <reaction evidence="1">
        <text>3-methyl-2-oxobutanoate + (6R)-5,10-methylene-5,6,7,8-tetrahydrofolate + H2O = 2-dehydropantoate + (6S)-5,6,7,8-tetrahydrofolate</text>
        <dbReference type="Rhea" id="RHEA:11824"/>
        <dbReference type="ChEBI" id="CHEBI:11561"/>
        <dbReference type="ChEBI" id="CHEBI:11851"/>
        <dbReference type="ChEBI" id="CHEBI:15377"/>
        <dbReference type="ChEBI" id="CHEBI:15636"/>
        <dbReference type="ChEBI" id="CHEBI:57453"/>
        <dbReference type="EC" id="2.1.2.11"/>
    </reaction>
</comment>
<comment type="cofactor">
    <cofactor evidence="1">
        <name>Mg(2+)</name>
        <dbReference type="ChEBI" id="CHEBI:18420"/>
    </cofactor>
    <text evidence="1">Binds 1 Mg(2+) ion per subunit.</text>
</comment>
<comment type="pathway">
    <text evidence="1">Cofactor biosynthesis; (R)-pantothenate biosynthesis; (R)-pantoate from 3-methyl-2-oxobutanoate: step 1/2.</text>
</comment>
<comment type="subunit">
    <text evidence="1">Homodecamer; pentamer of dimers.</text>
</comment>
<comment type="subcellular location">
    <subcellularLocation>
        <location evidence="1">Cytoplasm</location>
    </subcellularLocation>
</comment>
<comment type="similarity">
    <text evidence="1">Belongs to the PanB family.</text>
</comment>
<comment type="sequence caution" evidence="2">
    <conflict type="erroneous initiation">
        <sequence resource="EMBL-CDS" id="AAV90576"/>
    </conflict>
</comment>
<sequence>MNQHGRSAEPGVASEGIAPYGDAHRGIAAKRKKTTTARISQMRVDGEKIAVLTAYDATFAAAADAAGVDCIMVGDSLGMVCQGRTTTVGVSLEDMLYHTRCVSQGIARADGSALIIADLPFGSYQQSNEQAIASAVQLMQAGAHMVKLEGGDWWTVDIVEFLVQRGIPVCAHLRLTPQTVSALGGYRVQGRSEEAAEKLRVDAGALDNAGASMMVLEMIPTELATSITSEMKSCATIGIGAGSGTAGQVLVMHDMLGINLGRMAKFVRNFMRDAEDVPTAFAAYVAAVKDGSFPDDKLHGFL</sequence>
<accession>Q5NL34</accession>